<dbReference type="EC" id="2.5.1.61" evidence="1"/>
<dbReference type="EMBL" id="CP000552">
    <property type="protein sequence ID" value="ABM71768.1"/>
    <property type="molecule type" value="Genomic_DNA"/>
</dbReference>
<dbReference type="RefSeq" id="WP_011819875.1">
    <property type="nucleotide sequence ID" value="NC_008817.1"/>
</dbReference>
<dbReference type="SMR" id="A2BVF7"/>
<dbReference type="STRING" id="167542.P9515_05591"/>
<dbReference type="GeneID" id="60201127"/>
<dbReference type="KEGG" id="pmc:P9515_05591"/>
<dbReference type="eggNOG" id="COG0181">
    <property type="taxonomic scope" value="Bacteria"/>
</dbReference>
<dbReference type="HOGENOM" id="CLU_019704_0_2_3"/>
<dbReference type="OrthoDB" id="9810298at2"/>
<dbReference type="UniPathway" id="UPA00251">
    <property type="reaction ID" value="UER00319"/>
</dbReference>
<dbReference type="UniPathway" id="UPA00668"/>
<dbReference type="Proteomes" id="UP000001589">
    <property type="component" value="Chromosome"/>
</dbReference>
<dbReference type="GO" id="GO:0005737">
    <property type="term" value="C:cytoplasm"/>
    <property type="evidence" value="ECO:0007669"/>
    <property type="project" value="TreeGrafter"/>
</dbReference>
<dbReference type="GO" id="GO:0004418">
    <property type="term" value="F:hydroxymethylbilane synthase activity"/>
    <property type="evidence" value="ECO:0007669"/>
    <property type="project" value="UniProtKB-UniRule"/>
</dbReference>
<dbReference type="GO" id="GO:0015995">
    <property type="term" value="P:chlorophyll biosynthetic process"/>
    <property type="evidence" value="ECO:0007669"/>
    <property type="project" value="UniProtKB-UniRule"/>
</dbReference>
<dbReference type="GO" id="GO:0006782">
    <property type="term" value="P:protoporphyrinogen IX biosynthetic process"/>
    <property type="evidence" value="ECO:0007669"/>
    <property type="project" value="UniProtKB-UniRule"/>
</dbReference>
<dbReference type="CDD" id="cd13645">
    <property type="entry name" value="PBP2_HuPBGD_like"/>
    <property type="match status" value="1"/>
</dbReference>
<dbReference type="FunFam" id="3.30.160.40:FF:000002">
    <property type="entry name" value="Porphobilinogen deaminase"/>
    <property type="match status" value="1"/>
</dbReference>
<dbReference type="FunFam" id="3.40.190.10:FF:000004">
    <property type="entry name" value="Porphobilinogen deaminase"/>
    <property type="match status" value="1"/>
</dbReference>
<dbReference type="FunFam" id="3.40.190.10:FF:000005">
    <property type="entry name" value="Porphobilinogen deaminase"/>
    <property type="match status" value="1"/>
</dbReference>
<dbReference type="Gene3D" id="3.40.190.10">
    <property type="entry name" value="Periplasmic binding protein-like II"/>
    <property type="match status" value="2"/>
</dbReference>
<dbReference type="Gene3D" id="3.30.160.40">
    <property type="entry name" value="Porphobilinogen deaminase, C-terminal domain"/>
    <property type="match status" value="1"/>
</dbReference>
<dbReference type="HAMAP" id="MF_00260">
    <property type="entry name" value="Porphobil_deam"/>
    <property type="match status" value="1"/>
</dbReference>
<dbReference type="InterPro" id="IPR000860">
    <property type="entry name" value="HemC"/>
</dbReference>
<dbReference type="InterPro" id="IPR022419">
    <property type="entry name" value="Porphobilin_deaminase_cofac_BS"/>
</dbReference>
<dbReference type="InterPro" id="IPR022417">
    <property type="entry name" value="Porphobilin_deaminase_N"/>
</dbReference>
<dbReference type="InterPro" id="IPR022418">
    <property type="entry name" value="Porphobilinogen_deaminase_C"/>
</dbReference>
<dbReference type="InterPro" id="IPR036803">
    <property type="entry name" value="Porphobilinogen_deaminase_C_sf"/>
</dbReference>
<dbReference type="NCBIfam" id="TIGR00212">
    <property type="entry name" value="hemC"/>
    <property type="match status" value="1"/>
</dbReference>
<dbReference type="PANTHER" id="PTHR11557">
    <property type="entry name" value="PORPHOBILINOGEN DEAMINASE"/>
    <property type="match status" value="1"/>
</dbReference>
<dbReference type="PANTHER" id="PTHR11557:SF0">
    <property type="entry name" value="PORPHOBILINOGEN DEAMINASE"/>
    <property type="match status" value="1"/>
</dbReference>
<dbReference type="Pfam" id="PF01379">
    <property type="entry name" value="Porphobil_deam"/>
    <property type="match status" value="1"/>
</dbReference>
<dbReference type="Pfam" id="PF03900">
    <property type="entry name" value="Porphobil_deamC"/>
    <property type="match status" value="1"/>
</dbReference>
<dbReference type="PIRSF" id="PIRSF001438">
    <property type="entry name" value="4pyrrol_synth_OHMeBilane_synth"/>
    <property type="match status" value="1"/>
</dbReference>
<dbReference type="PRINTS" id="PR00151">
    <property type="entry name" value="PORPHBDMNASE"/>
</dbReference>
<dbReference type="SUPFAM" id="SSF53850">
    <property type="entry name" value="Periplasmic binding protein-like II"/>
    <property type="match status" value="1"/>
</dbReference>
<dbReference type="SUPFAM" id="SSF54782">
    <property type="entry name" value="Porphobilinogen deaminase (hydroxymethylbilane synthase), C-terminal domain"/>
    <property type="match status" value="1"/>
</dbReference>
<dbReference type="PROSITE" id="PS00533">
    <property type="entry name" value="PORPHOBILINOGEN_DEAM"/>
    <property type="match status" value="1"/>
</dbReference>
<proteinExistence type="inferred from homology"/>
<name>HEM3_PROM5</name>
<organism>
    <name type="scientific">Prochlorococcus marinus (strain MIT 9515)</name>
    <dbReference type="NCBI Taxonomy" id="167542"/>
    <lineage>
        <taxon>Bacteria</taxon>
        <taxon>Bacillati</taxon>
        <taxon>Cyanobacteriota</taxon>
        <taxon>Cyanophyceae</taxon>
        <taxon>Synechococcales</taxon>
        <taxon>Prochlorococcaceae</taxon>
        <taxon>Prochlorococcus</taxon>
    </lineage>
</organism>
<comment type="function">
    <text evidence="1">Tetrapolymerization of the monopyrrole PBG into the hydroxymethylbilane pre-uroporphyrinogen in several discrete steps.</text>
</comment>
<comment type="catalytic activity">
    <reaction evidence="1">
        <text>4 porphobilinogen + H2O = hydroxymethylbilane + 4 NH4(+)</text>
        <dbReference type="Rhea" id="RHEA:13185"/>
        <dbReference type="ChEBI" id="CHEBI:15377"/>
        <dbReference type="ChEBI" id="CHEBI:28938"/>
        <dbReference type="ChEBI" id="CHEBI:57845"/>
        <dbReference type="ChEBI" id="CHEBI:58126"/>
        <dbReference type="EC" id="2.5.1.61"/>
    </reaction>
</comment>
<comment type="cofactor">
    <cofactor evidence="1">
        <name>dipyrromethane</name>
        <dbReference type="ChEBI" id="CHEBI:60342"/>
    </cofactor>
    <text evidence="1">Binds 1 dipyrromethane group covalently.</text>
</comment>
<comment type="pathway">
    <text evidence="1">Porphyrin-containing compound metabolism; protoporphyrin-IX biosynthesis; coproporphyrinogen-III from 5-aminolevulinate: step 2/4.</text>
</comment>
<comment type="pathway">
    <text evidence="1">Porphyrin-containing compound metabolism; chlorophyll biosynthesis.</text>
</comment>
<comment type="subunit">
    <text evidence="1">Monomer.</text>
</comment>
<comment type="miscellaneous">
    <text evidence="1">The porphobilinogen subunits are added to the dipyrromethane group.</text>
</comment>
<comment type="similarity">
    <text evidence="1">Belongs to the HMBS family.</text>
</comment>
<gene>
    <name evidence="1" type="primary">hemC</name>
    <name type="ordered locus">P9515_05591</name>
</gene>
<feature type="chain" id="PRO_0000304262" description="Porphobilinogen deaminase">
    <location>
        <begin position="1"/>
        <end position="316"/>
    </location>
</feature>
<feature type="modified residue" description="S-(dipyrrolylmethanemethyl)cysteine" evidence="1">
    <location>
        <position position="245"/>
    </location>
</feature>
<accession>A2BVF7</accession>
<protein>
    <recommendedName>
        <fullName evidence="1">Porphobilinogen deaminase</fullName>
        <shortName evidence="1">PBG</shortName>
        <ecNumber evidence="1">2.5.1.61</ecNumber>
    </recommendedName>
    <alternativeName>
        <fullName evidence="1">Hydroxymethylbilane synthase</fullName>
        <shortName evidence="1">HMBS</shortName>
    </alternativeName>
    <alternativeName>
        <fullName evidence="1">Pre-uroporphyrinogen synthase</fullName>
    </alternativeName>
</protein>
<evidence type="ECO:0000255" key="1">
    <source>
        <dbReference type="HAMAP-Rule" id="MF_00260"/>
    </source>
</evidence>
<reference key="1">
    <citation type="journal article" date="2007" name="PLoS Genet.">
        <title>Patterns and implications of gene gain and loss in the evolution of Prochlorococcus.</title>
        <authorList>
            <person name="Kettler G.C."/>
            <person name="Martiny A.C."/>
            <person name="Huang K."/>
            <person name="Zucker J."/>
            <person name="Coleman M.L."/>
            <person name="Rodrigue S."/>
            <person name="Chen F."/>
            <person name="Lapidus A."/>
            <person name="Ferriera S."/>
            <person name="Johnson J."/>
            <person name="Steglich C."/>
            <person name="Church G.M."/>
            <person name="Richardson P."/>
            <person name="Chisholm S.W."/>
        </authorList>
    </citation>
    <scope>NUCLEOTIDE SEQUENCE [LARGE SCALE GENOMIC DNA]</scope>
    <source>
        <strain>MIT 9515</strain>
    </source>
</reference>
<keyword id="KW-0149">Chlorophyll biosynthesis</keyword>
<keyword id="KW-0627">Porphyrin biosynthesis</keyword>
<keyword id="KW-0808">Transferase</keyword>
<sequence>MTKLKLKIASRRSKLAMVQTLWVKEQLEKNIPNLEVSIESMATQGDKILDVALAKIGDKGLFTKELEAQMLIGKADIAVHSLKDLPTNLPDGLKLGCITKREDPSDALVVNKKNEIYQLESLPAGSIVGTSSLRRLAQLRYKFPYLNFKDIRGNVITRIEKLDSGEFDCIILAAAGLKRLGFESRIHQIIPNEISLHAVGQGALGIECKSEDKEVLKIISVLEDKASSQKCLAERSFLRELEGGCQVPIGVNSSIQNDEICLKGMVASIDGKKLIKDESSGNVKYPEEVGKKLAEKLKLQGADKILSEIFEQFRDK</sequence>